<sequence>MAQQGQGSMDPAALDDIIRRLLDYRNPKPGTKQAMLNESEIRQLCIVSREIFLQQPNLLELEAPIKICGDIHGQYSDLLRLFEYGGFPPTANYLFLGDYVDRGKQSLETICLLLAYKIKYPENFFLLRGNHECASINRIYGFYDECKRRFSVRLWKVFTDSFNCLPVAAVIDDKILCMHGGLSPDLTNVEQIKNIKRPTDVPDSGLLCDLLWSDPSKDVKGWGMNDRGVSYTFGPDKVAEFLIKNDMDLICRAHQVVEDGYEFFADRQLVTIFSAPNYCGEFDNAGAMMSVDESLMCSFQILKPADRKPRFL</sequence>
<evidence type="ECO:0000250" key="1"/>
<evidence type="ECO:0000269" key="2">
    <source>
    </source>
</evidence>
<evidence type="ECO:0000269" key="3">
    <source>
    </source>
</evidence>
<evidence type="ECO:0000269" key="4">
    <source>
    </source>
</evidence>
<evidence type="ECO:0000303" key="5">
    <source>
    </source>
</evidence>
<evidence type="ECO:0000305" key="6"/>
<evidence type="ECO:0000312" key="7">
    <source>
        <dbReference type="Araport" id="AT5G59160"/>
    </source>
</evidence>
<evidence type="ECO:0000312" key="8">
    <source>
        <dbReference type="EMBL" id="BAB09762.1"/>
    </source>
</evidence>
<evidence type="ECO:0007744" key="9">
    <source>
    </source>
</evidence>
<dbReference type="EC" id="3.1.3.16" evidence="3"/>
<dbReference type="EMBL" id="M93409">
    <property type="protein sequence ID" value="AAA32837.1"/>
    <property type="molecule type" value="mRNA"/>
</dbReference>
<dbReference type="EMBL" id="Z12163">
    <property type="protein sequence ID" value="CAA78153.1"/>
    <property type="molecule type" value="mRNA"/>
</dbReference>
<dbReference type="EMBL" id="AB016890">
    <property type="protein sequence ID" value="BAB09762.1"/>
    <property type="molecule type" value="Genomic_DNA"/>
</dbReference>
<dbReference type="EMBL" id="CP002688">
    <property type="protein sequence ID" value="AED97150.1"/>
    <property type="molecule type" value="Genomic_DNA"/>
</dbReference>
<dbReference type="EMBL" id="CP002688">
    <property type="protein sequence ID" value="AED97151.1"/>
    <property type="molecule type" value="Genomic_DNA"/>
</dbReference>
<dbReference type="EMBL" id="CP002688">
    <property type="protein sequence ID" value="AED97152.1"/>
    <property type="molecule type" value="Genomic_DNA"/>
</dbReference>
<dbReference type="EMBL" id="AY042840">
    <property type="protein sequence ID" value="AAK68780.1"/>
    <property type="molecule type" value="mRNA"/>
</dbReference>
<dbReference type="EMBL" id="BT002401">
    <property type="protein sequence ID" value="AAO00761.1"/>
    <property type="molecule type" value="mRNA"/>
</dbReference>
<dbReference type="EMBL" id="BT024861">
    <property type="protein sequence ID" value="ABD65592.1"/>
    <property type="molecule type" value="mRNA"/>
</dbReference>
<dbReference type="PIR" id="S24264">
    <property type="entry name" value="S24264"/>
</dbReference>
<dbReference type="PIR" id="S31086">
    <property type="entry name" value="S31086"/>
</dbReference>
<dbReference type="RefSeq" id="NP_001032103.1">
    <property type="nucleotide sequence ID" value="NM_001037026.1"/>
</dbReference>
<dbReference type="RefSeq" id="NP_200724.1">
    <property type="nucleotide sequence ID" value="NM_125306.2"/>
</dbReference>
<dbReference type="RefSeq" id="NP_851218.1">
    <property type="nucleotide sequence ID" value="NM_180887.5"/>
</dbReference>
<dbReference type="SMR" id="P48482"/>
<dbReference type="BioGRID" id="21278">
    <property type="interactions" value="1"/>
</dbReference>
<dbReference type="FunCoup" id="P48482">
    <property type="interactions" value="4168"/>
</dbReference>
<dbReference type="STRING" id="3702.P48482"/>
<dbReference type="iPTMnet" id="P48482"/>
<dbReference type="PaxDb" id="3702-AT5G59160.2"/>
<dbReference type="ProteomicsDB" id="249065"/>
<dbReference type="EnsemblPlants" id="AT5G59160.1">
    <property type="protein sequence ID" value="AT5G59160.1"/>
    <property type="gene ID" value="AT5G59160"/>
</dbReference>
<dbReference type="EnsemblPlants" id="AT5G59160.2">
    <property type="protein sequence ID" value="AT5G59160.2"/>
    <property type="gene ID" value="AT5G59160"/>
</dbReference>
<dbReference type="EnsemblPlants" id="AT5G59160.3">
    <property type="protein sequence ID" value="AT5G59160.3"/>
    <property type="gene ID" value="AT5G59160"/>
</dbReference>
<dbReference type="GeneID" id="836034"/>
<dbReference type="Gramene" id="AT5G59160.1">
    <property type="protein sequence ID" value="AT5G59160.1"/>
    <property type="gene ID" value="AT5G59160"/>
</dbReference>
<dbReference type="Gramene" id="AT5G59160.2">
    <property type="protein sequence ID" value="AT5G59160.2"/>
    <property type="gene ID" value="AT5G59160"/>
</dbReference>
<dbReference type="Gramene" id="AT5G59160.3">
    <property type="protein sequence ID" value="AT5G59160.3"/>
    <property type="gene ID" value="AT5G59160"/>
</dbReference>
<dbReference type="KEGG" id="ath:AT5G59160"/>
<dbReference type="Araport" id="AT5G59160"/>
<dbReference type="TAIR" id="AT5G59160">
    <property type="gene designation" value="TOPP2"/>
</dbReference>
<dbReference type="eggNOG" id="KOG0374">
    <property type="taxonomic scope" value="Eukaryota"/>
</dbReference>
<dbReference type="HOGENOM" id="CLU_004962_0_0_1"/>
<dbReference type="InParanoid" id="P48482"/>
<dbReference type="OMA" id="MAQNEHQ"/>
<dbReference type="OrthoDB" id="1023513at2759"/>
<dbReference type="PhylomeDB" id="P48482"/>
<dbReference type="PRO" id="PR:P48482"/>
<dbReference type="Proteomes" id="UP000006548">
    <property type="component" value="Chromosome 5"/>
</dbReference>
<dbReference type="ExpressionAtlas" id="P48482">
    <property type="expression patterns" value="baseline and differential"/>
</dbReference>
<dbReference type="GO" id="GO:0005634">
    <property type="term" value="C:nucleus"/>
    <property type="evidence" value="ECO:0007669"/>
    <property type="project" value="UniProtKB-SubCell"/>
</dbReference>
<dbReference type="GO" id="GO:0000164">
    <property type="term" value="C:protein phosphatase type 1 complex"/>
    <property type="evidence" value="ECO:0000250"/>
    <property type="project" value="TAIR"/>
</dbReference>
<dbReference type="GO" id="GO:0046872">
    <property type="term" value="F:metal ion binding"/>
    <property type="evidence" value="ECO:0007669"/>
    <property type="project" value="UniProtKB-KW"/>
</dbReference>
<dbReference type="GO" id="GO:0004722">
    <property type="term" value="F:protein serine/threonine phosphatase activity"/>
    <property type="evidence" value="ECO:0000314"/>
    <property type="project" value="TAIR"/>
</dbReference>
<dbReference type="GO" id="GO:0006470">
    <property type="term" value="P:protein dephosphorylation"/>
    <property type="evidence" value="ECO:0000304"/>
    <property type="project" value="TAIR"/>
</dbReference>
<dbReference type="CDD" id="cd07414">
    <property type="entry name" value="MPP_PP1_PPKL"/>
    <property type="match status" value="1"/>
</dbReference>
<dbReference type="FunFam" id="3.60.21.10:FF:000212">
    <property type="entry name" value="Serine/threonine-protein phosphatase"/>
    <property type="match status" value="1"/>
</dbReference>
<dbReference type="Gene3D" id="3.60.21.10">
    <property type="match status" value="1"/>
</dbReference>
<dbReference type="InterPro" id="IPR004843">
    <property type="entry name" value="Calcineurin-like_PHP_ApaH"/>
</dbReference>
<dbReference type="InterPro" id="IPR029052">
    <property type="entry name" value="Metallo-depent_PP-like"/>
</dbReference>
<dbReference type="InterPro" id="IPR050341">
    <property type="entry name" value="PP1_catalytic_subunit"/>
</dbReference>
<dbReference type="InterPro" id="IPR006186">
    <property type="entry name" value="Ser/Thr-sp_prot-phosphatase"/>
</dbReference>
<dbReference type="InterPro" id="IPR031675">
    <property type="entry name" value="STPPase_N"/>
</dbReference>
<dbReference type="PANTHER" id="PTHR11668">
    <property type="entry name" value="SERINE/THREONINE PROTEIN PHOSPHATASE"/>
    <property type="match status" value="1"/>
</dbReference>
<dbReference type="PANTHER" id="PTHR11668:SF511">
    <property type="entry name" value="SERINE_THREONINE-PROTEIN PHOSPHATASE PP1 ISOZYME 2-RELATED"/>
    <property type="match status" value="1"/>
</dbReference>
<dbReference type="Pfam" id="PF00149">
    <property type="entry name" value="Metallophos"/>
    <property type="match status" value="1"/>
</dbReference>
<dbReference type="Pfam" id="PF16891">
    <property type="entry name" value="STPPase_N"/>
    <property type="match status" value="1"/>
</dbReference>
<dbReference type="PRINTS" id="PR00114">
    <property type="entry name" value="STPHPHTASE"/>
</dbReference>
<dbReference type="SMART" id="SM00156">
    <property type="entry name" value="PP2Ac"/>
    <property type="match status" value="1"/>
</dbReference>
<dbReference type="SUPFAM" id="SSF56300">
    <property type="entry name" value="Metallo-dependent phosphatases"/>
    <property type="match status" value="1"/>
</dbReference>
<dbReference type="PROSITE" id="PS00125">
    <property type="entry name" value="SER_THR_PHOSPHATASE"/>
    <property type="match status" value="1"/>
</dbReference>
<feature type="initiator methionine" description="Removed" evidence="9">
    <location>
        <position position="1"/>
    </location>
</feature>
<feature type="chain" id="PRO_0000058798" description="Serine/threonine-protein phosphatase PP1 isozyme 2">
    <location>
        <begin position="2"/>
        <end position="312"/>
    </location>
</feature>
<feature type="active site" description="Proton donor" evidence="1">
    <location>
        <position position="131"/>
    </location>
</feature>
<feature type="binding site" evidence="1">
    <location>
        <position position="70"/>
    </location>
    <ligand>
        <name>Mn(2+)</name>
        <dbReference type="ChEBI" id="CHEBI:29035"/>
        <label>1</label>
    </ligand>
</feature>
<feature type="binding site" evidence="1">
    <location>
        <position position="72"/>
    </location>
    <ligand>
        <name>Mn(2+)</name>
        <dbReference type="ChEBI" id="CHEBI:29035"/>
        <label>1</label>
    </ligand>
</feature>
<feature type="binding site" evidence="1">
    <location>
        <position position="98"/>
    </location>
    <ligand>
        <name>Mn(2+)</name>
        <dbReference type="ChEBI" id="CHEBI:29035"/>
        <label>1</label>
    </ligand>
</feature>
<feature type="binding site" evidence="1">
    <location>
        <position position="98"/>
    </location>
    <ligand>
        <name>Mn(2+)</name>
        <dbReference type="ChEBI" id="CHEBI:29035"/>
        <label>2</label>
    </ligand>
</feature>
<feature type="binding site" evidence="1">
    <location>
        <position position="130"/>
    </location>
    <ligand>
        <name>Mn(2+)</name>
        <dbReference type="ChEBI" id="CHEBI:29035"/>
        <label>2</label>
    </ligand>
</feature>
<feature type="binding site" evidence="1">
    <location>
        <position position="179"/>
    </location>
    <ligand>
        <name>Mn(2+)</name>
        <dbReference type="ChEBI" id="CHEBI:29035"/>
        <label>2</label>
    </ligand>
</feature>
<feature type="binding site" evidence="1">
    <location>
        <position position="254"/>
    </location>
    <ligand>
        <name>Mn(2+)</name>
        <dbReference type="ChEBI" id="CHEBI:29035"/>
        <label>2</label>
    </ligand>
</feature>
<feature type="modified residue" description="N-acetylalanine" evidence="9">
    <location>
        <position position="2"/>
    </location>
</feature>
<feature type="sequence conflict" description="In Ref. 2; CAA78153." evidence="6" ref="2">
    <original>GL</original>
    <variation>AI</variation>
    <location>
        <begin position="181"/>
        <end position="182"/>
    </location>
</feature>
<keyword id="KW-0007">Acetylation</keyword>
<keyword id="KW-0963">Cytoplasm</keyword>
<keyword id="KW-0378">Hydrolase</keyword>
<keyword id="KW-0464">Manganese</keyword>
<keyword id="KW-0479">Metal-binding</keyword>
<keyword id="KW-0539">Nucleus</keyword>
<keyword id="KW-0904">Protein phosphatase</keyword>
<keyword id="KW-1185">Reference proteome</keyword>
<accession>P48482</accession>
<accession>Q24JM8</accession>
<accession>Q94B57</accession>
<gene>
    <name evidence="5" type="primary">TOPP2</name>
    <name evidence="7" type="ordered locus">At5g59160</name>
    <name evidence="8" type="ORF">MNC17.7</name>
</gene>
<comment type="function">
    <text evidence="3">Serine/threonine-protein phosphatase that possesses phosphatase activity toward para-nitrophenyl phosphate (pNPP) in vitro.</text>
</comment>
<comment type="catalytic activity">
    <reaction evidence="3">
        <text>O-phospho-L-seryl-[protein] + H2O = L-seryl-[protein] + phosphate</text>
        <dbReference type="Rhea" id="RHEA:20629"/>
        <dbReference type="Rhea" id="RHEA-COMP:9863"/>
        <dbReference type="Rhea" id="RHEA-COMP:11604"/>
        <dbReference type="ChEBI" id="CHEBI:15377"/>
        <dbReference type="ChEBI" id="CHEBI:29999"/>
        <dbReference type="ChEBI" id="CHEBI:43474"/>
        <dbReference type="ChEBI" id="CHEBI:83421"/>
        <dbReference type="EC" id="3.1.3.16"/>
    </reaction>
</comment>
<comment type="catalytic activity">
    <reaction evidence="3">
        <text>O-phospho-L-threonyl-[protein] + H2O = L-threonyl-[protein] + phosphate</text>
        <dbReference type="Rhea" id="RHEA:47004"/>
        <dbReference type="Rhea" id="RHEA-COMP:11060"/>
        <dbReference type="Rhea" id="RHEA-COMP:11605"/>
        <dbReference type="ChEBI" id="CHEBI:15377"/>
        <dbReference type="ChEBI" id="CHEBI:30013"/>
        <dbReference type="ChEBI" id="CHEBI:43474"/>
        <dbReference type="ChEBI" id="CHEBI:61977"/>
        <dbReference type="EC" id="3.1.3.16"/>
    </reaction>
</comment>
<comment type="cofactor">
    <cofactor evidence="1">
        <name>Mn(2+)</name>
        <dbReference type="ChEBI" id="CHEBI:29035"/>
    </cofactor>
    <text evidence="1">Binds 2 manganese ions per subunit.</text>
</comment>
<comment type="activity regulation">
    <text evidence="3">Phosphatase activity is strongly reduced by the protein phosphatase inhibitor 2 (I-2).</text>
</comment>
<comment type="subunit">
    <text evidence="4">Interacts with SRK2D/SNRK2.2 and SRK2E/SNRK2.6.</text>
</comment>
<comment type="subcellular location">
    <subcellularLocation>
        <location evidence="2 3">Nucleus</location>
    </subcellularLocation>
    <subcellularLocation>
        <location evidence="2 3">Cytoplasm</location>
    </subcellularLocation>
    <text evidence="3">Predominantly localizes in the nucleus.</text>
</comment>
<comment type="similarity">
    <text evidence="6">Belongs to the PPP phosphatase family. PP-1 subfamily.</text>
</comment>
<name>PP12_ARATH</name>
<protein>
    <recommendedName>
        <fullName evidence="6">Serine/threonine-protein phosphatase PP1 isozyme 2</fullName>
        <ecNumber evidence="3">3.1.3.16</ecNumber>
    </recommendedName>
    <alternativeName>
        <fullName evidence="5">Type one protein phosphatase 2</fullName>
    </alternativeName>
</protein>
<reference key="1">
    <citation type="journal article" date="1993" name="Plant Mol. Biol.">
        <title>Expression of multiple type 1 phosphoprotein phosphatases in Arabidopsis thaliana.</title>
        <authorList>
            <person name="Smith R.D."/>
            <person name="Walker J.C."/>
        </authorList>
    </citation>
    <scope>NUCLEOTIDE SEQUENCE [MRNA]</scope>
</reference>
<reference key="2">
    <citation type="journal article" date="1993" name="Plant J.">
        <title>A protein phosphatase 1 from Arabidopsis thaliana restores temperature sensitivity of a Schizosaccharomyces pombe cdc25ts/wee1-double mutant.</title>
        <authorList>
            <person name="Ferreira P.C.G."/>
            <person name="Hemerly A.S."/>
            <person name="van Montagu M."/>
            <person name="Inze D."/>
        </authorList>
    </citation>
    <scope>NUCLEOTIDE SEQUENCE [MRNA]</scope>
</reference>
<reference key="3">
    <citation type="journal article" date="1998" name="DNA Res.">
        <title>Structural analysis of Arabidopsis thaliana chromosome 5. VIII. Sequence features of the regions of 1,081,958 bp covered by seventeen physically assigned P1 and TAC clones.</title>
        <authorList>
            <person name="Asamizu E."/>
            <person name="Sato S."/>
            <person name="Kaneko T."/>
            <person name="Nakamura Y."/>
            <person name="Kotani H."/>
            <person name="Miyajima N."/>
            <person name="Tabata S."/>
        </authorList>
    </citation>
    <scope>NUCLEOTIDE SEQUENCE [LARGE SCALE GENOMIC DNA]</scope>
    <source>
        <strain>cv. Columbia</strain>
    </source>
</reference>
<reference key="4">
    <citation type="journal article" date="2017" name="Plant J.">
        <title>Araport11: a complete reannotation of the Arabidopsis thaliana reference genome.</title>
        <authorList>
            <person name="Cheng C.Y."/>
            <person name="Krishnakumar V."/>
            <person name="Chan A.P."/>
            <person name="Thibaud-Nissen F."/>
            <person name="Schobel S."/>
            <person name="Town C.D."/>
        </authorList>
    </citation>
    <scope>GENOME REANNOTATION</scope>
    <source>
        <strain>cv. Columbia</strain>
    </source>
</reference>
<reference key="5">
    <citation type="journal article" date="2003" name="Science">
        <title>Empirical analysis of transcriptional activity in the Arabidopsis genome.</title>
        <authorList>
            <person name="Yamada K."/>
            <person name="Lim J."/>
            <person name="Dale J.M."/>
            <person name="Chen H."/>
            <person name="Shinn P."/>
            <person name="Palm C.J."/>
            <person name="Southwick A.M."/>
            <person name="Wu H.C."/>
            <person name="Kim C.J."/>
            <person name="Nguyen M."/>
            <person name="Pham P.K."/>
            <person name="Cheuk R.F."/>
            <person name="Karlin-Newmann G."/>
            <person name="Liu S.X."/>
            <person name="Lam B."/>
            <person name="Sakano H."/>
            <person name="Wu T."/>
            <person name="Yu G."/>
            <person name="Miranda M."/>
            <person name="Quach H.L."/>
            <person name="Tripp M."/>
            <person name="Chang C.H."/>
            <person name="Lee J.M."/>
            <person name="Toriumi M.J."/>
            <person name="Chan M.M."/>
            <person name="Tang C.C."/>
            <person name="Onodera C.S."/>
            <person name="Deng J.M."/>
            <person name="Akiyama K."/>
            <person name="Ansari Y."/>
            <person name="Arakawa T."/>
            <person name="Banh J."/>
            <person name="Banno F."/>
            <person name="Bowser L."/>
            <person name="Brooks S.Y."/>
            <person name="Carninci P."/>
            <person name="Chao Q."/>
            <person name="Choy N."/>
            <person name="Enju A."/>
            <person name="Goldsmith A.D."/>
            <person name="Gurjal M."/>
            <person name="Hansen N.F."/>
            <person name="Hayashizaki Y."/>
            <person name="Johnson-Hopson C."/>
            <person name="Hsuan V.W."/>
            <person name="Iida K."/>
            <person name="Karnes M."/>
            <person name="Khan S."/>
            <person name="Koesema E."/>
            <person name="Ishida J."/>
            <person name="Jiang P.X."/>
            <person name="Jones T."/>
            <person name="Kawai J."/>
            <person name="Kamiya A."/>
            <person name="Meyers C."/>
            <person name="Nakajima M."/>
            <person name="Narusaka M."/>
            <person name="Seki M."/>
            <person name="Sakurai T."/>
            <person name="Satou M."/>
            <person name="Tamse R."/>
            <person name="Vaysberg M."/>
            <person name="Wallender E.K."/>
            <person name="Wong C."/>
            <person name="Yamamura Y."/>
            <person name="Yuan S."/>
            <person name="Shinozaki K."/>
            <person name="Davis R.W."/>
            <person name="Theologis A."/>
            <person name="Ecker J.R."/>
        </authorList>
    </citation>
    <scope>NUCLEOTIDE SEQUENCE [LARGE SCALE MRNA]</scope>
    <source>
        <strain>cv. Columbia</strain>
    </source>
</reference>
<reference key="6">
    <citation type="submission" date="2006-03" db="EMBL/GenBank/DDBJ databases">
        <title>Arabidopsis ORF clones.</title>
        <authorList>
            <person name="Kim C.J."/>
            <person name="Chen H."/>
            <person name="Shinn P."/>
            <person name="Ecker J.R."/>
        </authorList>
    </citation>
    <scope>NUCLEOTIDE SEQUENCE [LARGE SCALE MRNA]</scope>
    <source>
        <strain>cv. Columbia</strain>
    </source>
</reference>
<reference key="7">
    <citation type="journal article" date="2007" name="Trends Plant Sci.">
        <title>Arabidopsis PPP family of serine/threonine phosphatases.</title>
        <authorList>
            <person name="Farkas I."/>
            <person name="Dombradi V."/>
            <person name="Miskei M."/>
            <person name="Szabados L."/>
            <person name="Koncz C."/>
        </authorList>
    </citation>
    <scope>GENE FAMILY</scope>
    <scope>NOMENCLATURE</scope>
</reference>
<reference key="8">
    <citation type="journal article" date="2009" name="Plant Physiol.">
        <title>Identification and functional characterization of inhibitor-3, a regulatory subunit of protein phosphatase 1 in plants.</title>
        <authorList>
            <person name="Takemiya A."/>
            <person name="Ariyoshi C."/>
            <person name="Shimazaki K."/>
        </authorList>
    </citation>
    <scope>SUBCELLULAR LOCATION</scope>
</reference>
<reference key="9">
    <citation type="journal article" date="2011" name="Biochem. J.">
        <title>Identification and characterization of AtI-2, an Arabidopsis homologue of an ancient protein phosphatase 1 (PP1) regulatory subunit.</title>
        <authorList>
            <person name="Templeton G.W."/>
            <person name="Nimick M."/>
            <person name="Morrice N."/>
            <person name="Campbell D."/>
            <person name="Goudreault M."/>
            <person name="Gingras A.C."/>
            <person name="Takemiya A."/>
            <person name="Shimazaki K."/>
            <person name="Moorhead G.B."/>
        </authorList>
    </citation>
    <scope>IDENTIFICATION BY MASS SPECTROMETRY</scope>
    <scope>FUNCTION</scope>
    <scope>CATALYTIC ACTIVITY</scope>
    <scope>ACTIVITY REGULATION</scope>
    <scope>SUBCELLULAR LOCATION</scope>
</reference>
<reference key="10">
    <citation type="journal article" date="2012" name="Mol. Cell. Proteomics">
        <title>Comparative large-scale characterisation of plant vs. mammal proteins reveals similar and idiosyncratic N-alpha acetylation features.</title>
        <authorList>
            <person name="Bienvenut W.V."/>
            <person name="Sumpton D."/>
            <person name="Martinez A."/>
            <person name="Lilla S."/>
            <person name="Espagne C."/>
            <person name="Meinnel T."/>
            <person name="Giglione C."/>
        </authorList>
    </citation>
    <scope>ACETYLATION [LARGE SCALE ANALYSIS] AT ALA-2</scope>
    <scope>CLEAVAGE OF INITIATOR METHIONINE [LARGE SCALE ANALYSIS]</scope>
    <scope>IDENTIFICATION BY MASS SPECTROMETRY [LARGE SCALE ANALYSIS]</scope>
</reference>
<reference key="11">
    <citation type="journal article" date="2016" name="PLoS Genet.">
        <title>Type one protein phosphatase 1 and its regulatory protein inhibitor 2 negatively regulate ABA signaling.</title>
        <authorList>
            <person name="Hou Y.J."/>
            <person name="Zhu Y."/>
            <person name="Wang P."/>
            <person name="Zhao Y."/>
            <person name="Xie S."/>
            <person name="Batelli G."/>
            <person name="Wang B."/>
            <person name="Duan C.G."/>
            <person name="Wang X."/>
            <person name="Xing L."/>
            <person name="Lei M."/>
            <person name="Yan J."/>
            <person name="Zhu X."/>
            <person name="Zhu J.K."/>
        </authorList>
    </citation>
    <scope>INTERACTION WITH SRK2D/SNRK2.2 AND SRK2E/SNRK2.6</scope>
</reference>
<proteinExistence type="evidence at protein level"/>
<organism>
    <name type="scientific">Arabidopsis thaliana</name>
    <name type="common">Mouse-ear cress</name>
    <dbReference type="NCBI Taxonomy" id="3702"/>
    <lineage>
        <taxon>Eukaryota</taxon>
        <taxon>Viridiplantae</taxon>
        <taxon>Streptophyta</taxon>
        <taxon>Embryophyta</taxon>
        <taxon>Tracheophyta</taxon>
        <taxon>Spermatophyta</taxon>
        <taxon>Magnoliopsida</taxon>
        <taxon>eudicotyledons</taxon>
        <taxon>Gunneridae</taxon>
        <taxon>Pentapetalae</taxon>
        <taxon>rosids</taxon>
        <taxon>malvids</taxon>
        <taxon>Brassicales</taxon>
        <taxon>Brassicaceae</taxon>
        <taxon>Camelineae</taxon>
        <taxon>Arabidopsis</taxon>
    </lineage>
</organism>